<sequence>MDVTRLLLATLLVFLCFFTAYSHLPPEEKLRDDRSLRSNSSVNLLDFPSVSIVALNKKSKQISRKEAEKKRSSKKEASMKKVARPRTPLSAPCVATRDSCKPPAPACCDPCASCQCRFFRSACSCRVLSLNC</sequence>
<organism>
    <name type="scientific">Chlorocebus aethiops</name>
    <name type="common">Green monkey</name>
    <name type="synonym">Cercopithecus aethiops</name>
    <dbReference type="NCBI Taxonomy" id="9534"/>
    <lineage>
        <taxon>Eukaryota</taxon>
        <taxon>Metazoa</taxon>
        <taxon>Chordata</taxon>
        <taxon>Craniata</taxon>
        <taxon>Vertebrata</taxon>
        <taxon>Euteleostomi</taxon>
        <taxon>Mammalia</taxon>
        <taxon>Eutheria</taxon>
        <taxon>Euarchontoglires</taxon>
        <taxon>Primates</taxon>
        <taxon>Haplorrhini</taxon>
        <taxon>Catarrhini</taxon>
        <taxon>Cercopithecidae</taxon>
        <taxon>Cercopithecinae</taxon>
        <taxon>Chlorocebus</taxon>
    </lineage>
</organism>
<protein>
    <recommendedName>
        <fullName>Agouti-signaling protein</fullName>
        <shortName>ASP</shortName>
    </recommendedName>
    <alternativeName>
        <fullName>Agouti switch protein</fullName>
    </alternativeName>
</protein>
<keyword id="KW-1015">Disulfide bond</keyword>
<keyword id="KW-0325">Glycoprotein</keyword>
<keyword id="KW-0960">Knottin</keyword>
<keyword id="KW-0964">Secreted</keyword>
<keyword id="KW-0732">Signal</keyword>
<feature type="signal peptide" evidence="4">
    <location>
        <begin position="1"/>
        <end position="22"/>
    </location>
</feature>
<feature type="chain" id="PRO_0000235195" description="Agouti-signaling protein">
    <location>
        <begin position="23"/>
        <end position="132"/>
    </location>
</feature>
<feature type="domain" description="Agouti" evidence="5">
    <location>
        <begin position="93"/>
        <end position="132"/>
    </location>
</feature>
<feature type="region of interest" description="Disordered" evidence="6">
    <location>
        <begin position="62"/>
        <end position="88"/>
    </location>
</feature>
<feature type="compositionally biased region" description="Basic and acidic residues" evidence="6">
    <location>
        <begin position="63"/>
        <end position="79"/>
    </location>
</feature>
<feature type="glycosylation site" description="N-linked (GlcNAc...) asparagine" evidence="4">
    <location>
        <position position="39"/>
    </location>
</feature>
<feature type="disulfide bond" evidence="5">
    <location>
        <begin position="93"/>
        <end position="108"/>
    </location>
</feature>
<feature type="disulfide bond" evidence="5">
    <location>
        <begin position="100"/>
        <end position="114"/>
    </location>
</feature>
<feature type="disulfide bond" evidence="5">
    <location>
        <begin position="107"/>
        <end position="125"/>
    </location>
</feature>
<feature type="disulfide bond" evidence="5">
    <location>
        <begin position="111"/>
        <end position="132"/>
    </location>
</feature>
<feature type="disulfide bond" evidence="5">
    <location>
        <begin position="116"/>
        <end position="123"/>
    </location>
</feature>
<gene>
    <name type="primary">ASIP</name>
</gene>
<accession>Q1XGV1</accession>
<proteinExistence type="inferred from homology"/>
<name>ASIP_CHLAE</name>
<comment type="function">
    <text evidence="3">Involved in the regulation of melanogenesis. The binding of ASP to MC1R precludes alpha-MSH initiated signaling and thus blocks production of cAMP, leading to a down-regulation of eumelanogenesis (brown/black pigment) and thus increasing synthesis of pheomelanin (yellow/red pigment) (By similarity).</text>
</comment>
<comment type="subcellular location">
    <subcellularLocation>
        <location evidence="2">Secreted</location>
    </subcellularLocation>
</comment>
<comment type="domain">
    <text evidence="1">The presence of a 'disulfide through disulfide knot' structurally defines this protein as a knottin.</text>
</comment>
<reference key="1">
    <citation type="journal article" date="2006" name="Genome Res.">
        <title>Alu-mediated 100-kb deletion in the primate genome: the loss of the agouti signaling protein gene in the lesser apes.</title>
        <authorList>
            <person name="Nakayama K."/>
            <person name="Ishida T."/>
        </authorList>
    </citation>
    <scope>NUCLEOTIDE SEQUENCE [GENOMIC DNA]</scope>
</reference>
<evidence type="ECO:0000250" key="1"/>
<evidence type="ECO:0000250" key="2">
    <source>
        <dbReference type="UniProtKB" id="P42127"/>
    </source>
</evidence>
<evidence type="ECO:0000250" key="3">
    <source>
        <dbReference type="UniProtKB" id="Q03288"/>
    </source>
</evidence>
<evidence type="ECO:0000255" key="4"/>
<evidence type="ECO:0000255" key="5">
    <source>
        <dbReference type="PROSITE-ProRule" id="PRU00494"/>
    </source>
</evidence>
<evidence type="ECO:0000256" key="6">
    <source>
        <dbReference type="SAM" id="MobiDB-lite"/>
    </source>
</evidence>
<dbReference type="EMBL" id="AB236875">
    <property type="protein sequence ID" value="BAE93023.1"/>
    <property type="molecule type" value="Genomic_DNA"/>
</dbReference>
<dbReference type="GlyCosmos" id="Q1XGV1">
    <property type="glycosylation" value="1 site, No reported glycans"/>
</dbReference>
<dbReference type="GO" id="GO:0005615">
    <property type="term" value="C:extracellular space"/>
    <property type="evidence" value="ECO:0000250"/>
    <property type="project" value="UniProtKB"/>
</dbReference>
<dbReference type="GO" id="GO:0031779">
    <property type="term" value="F:melanocortin receptor binding"/>
    <property type="evidence" value="ECO:0007669"/>
    <property type="project" value="TreeGrafter"/>
</dbReference>
<dbReference type="GO" id="GO:0005184">
    <property type="term" value="F:neuropeptide hormone activity"/>
    <property type="evidence" value="ECO:0007669"/>
    <property type="project" value="TreeGrafter"/>
</dbReference>
<dbReference type="GO" id="GO:0009755">
    <property type="term" value="P:hormone-mediated signaling pathway"/>
    <property type="evidence" value="ECO:0007669"/>
    <property type="project" value="InterPro"/>
</dbReference>
<dbReference type="GO" id="GO:0042438">
    <property type="term" value="P:melanin biosynthetic process"/>
    <property type="evidence" value="ECO:0000250"/>
    <property type="project" value="UniProtKB"/>
</dbReference>
<dbReference type="GO" id="GO:0032438">
    <property type="term" value="P:melanosome organization"/>
    <property type="evidence" value="ECO:0007669"/>
    <property type="project" value="TreeGrafter"/>
</dbReference>
<dbReference type="FunFam" id="4.10.760.10:FF:000002">
    <property type="entry name" value="Agouti-signaling protein"/>
    <property type="match status" value="1"/>
</dbReference>
<dbReference type="Gene3D" id="4.10.760.10">
    <property type="entry name" value="Agouti domain"/>
    <property type="match status" value="1"/>
</dbReference>
<dbReference type="InterPro" id="IPR007733">
    <property type="entry name" value="Agouti"/>
</dbReference>
<dbReference type="InterPro" id="IPR027300">
    <property type="entry name" value="Agouti_dom"/>
</dbReference>
<dbReference type="InterPro" id="IPR036836">
    <property type="entry name" value="Agouti_dom_sf"/>
</dbReference>
<dbReference type="PANTHER" id="PTHR16551">
    <property type="entry name" value="AGOUTI RELATED"/>
    <property type="match status" value="1"/>
</dbReference>
<dbReference type="PANTHER" id="PTHR16551:SF1">
    <property type="entry name" value="AGOUTI-SIGNALING PROTEIN"/>
    <property type="match status" value="1"/>
</dbReference>
<dbReference type="Pfam" id="PF05039">
    <property type="entry name" value="Agouti"/>
    <property type="match status" value="1"/>
</dbReference>
<dbReference type="SMART" id="SM00792">
    <property type="entry name" value="Agouti"/>
    <property type="match status" value="1"/>
</dbReference>
<dbReference type="SUPFAM" id="SSF57055">
    <property type="entry name" value="Agouti-related protein"/>
    <property type="match status" value="1"/>
</dbReference>
<dbReference type="PROSITE" id="PS60024">
    <property type="entry name" value="AGOUTI_1"/>
    <property type="match status" value="1"/>
</dbReference>
<dbReference type="PROSITE" id="PS51150">
    <property type="entry name" value="AGOUTI_2"/>
    <property type="match status" value="1"/>
</dbReference>